<sequence>MTDSNRWLLPEGIEEALPPLAERLETCRRQLLDLYHRWGYELVMPPMIEYLESLLTGTGSDLDLQTFKLTDQLNGRLMGVRADMTPQVARIDAHSLNRDVPTRLCYMGTVLHTRPDGFAGSRSPMQVGAELYGHKGLDSDVETIRLMLETFRVCGVGNIFLDLGHVDIYRSLAADAGLTADDEAQLFDMLQRKALPEIRAFLNGLDAPAEVRERLLALGELNGDTAVLDEARRLLAGAGERVVRALDELSAIAGAVQRLYPEVRLHVDLSELRGFHYHTGAVFAAYVPGHGQELARGGRYDDIGRVFGRARPATGFSTDLKTLVRLSGQPLAAAPRGIFAPADPDPALLDAVAELRSRGERVIQGLAGQGGDAAAMGCDRVLARDSKHQWTVTDL</sequence>
<reference key="1">
    <citation type="journal article" date="2011" name="Stand. Genomic Sci.">
        <title>Complete genome sequence of 'Thioalkalivibrio sulfidophilus' HL-EbGr7.</title>
        <authorList>
            <person name="Muyzer G."/>
            <person name="Sorokin D.Y."/>
            <person name="Mavromatis K."/>
            <person name="Lapidus A."/>
            <person name="Clum A."/>
            <person name="Ivanova N."/>
            <person name="Pati A."/>
            <person name="d'Haeseleer P."/>
            <person name="Woyke T."/>
            <person name="Kyrpides N.C."/>
        </authorList>
    </citation>
    <scope>NUCLEOTIDE SEQUENCE [LARGE SCALE GENOMIC DNA]</scope>
    <source>
        <strain>HL-EbGR7</strain>
    </source>
</reference>
<name>HISZ_THISH</name>
<keyword id="KW-0028">Amino-acid biosynthesis</keyword>
<keyword id="KW-0963">Cytoplasm</keyword>
<keyword id="KW-0368">Histidine biosynthesis</keyword>
<keyword id="KW-1185">Reference proteome</keyword>
<proteinExistence type="inferred from homology"/>
<evidence type="ECO:0000255" key="1">
    <source>
        <dbReference type="HAMAP-Rule" id="MF_00125"/>
    </source>
</evidence>
<comment type="function">
    <text evidence="1">Required for the first step of histidine biosynthesis. May allow the feedback regulation of ATP phosphoribosyltransferase activity by histidine.</text>
</comment>
<comment type="pathway">
    <text evidence="1">Amino-acid biosynthesis; L-histidine biosynthesis; L-histidine from 5-phospho-alpha-D-ribose 1-diphosphate: step 1/9.</text>
</comment>
<comment type="subunit">
    <text evidence="1">Heteromultimer composed of HisG and HisZ subunits.</text>
</comment>
<comment type="subcellular location">
    <subcellularLocation>
        <location evidence="1">Cytoplasm</location>
    </subcellularLocation>
</comment>
<comment type="miscellaneous">
    <text>This function is generally fulfilled by the C-terminal part of HisG, which is missing in some bacteria such as this one.</text>
</comment>
<comment type="similarity">
    <text evidence="1">Belongs to the class-II aminoacyl-tRNA synthetase family. HisZ subfamily.</text>
</comment>
<organism>
    <name type="scientific">Thioalkalivibrio sulfidiphilus (strain HL-EbGR7)</name>
    <dbReference type="NCBI Taxonomy" id="396588"/>
    <lineage>
        <taxon>Bacteria</taxon>
        <taxon>Pseudomonadati</taxon>
        <taxon>Pseudomonadota</taxon>
        <taxon>Gammaproteobacteria</taxon>
        <taxon>Chromatiales</taxon>
        <taxon>Ectothiorhodospiraceae</taxon>
        <taxon>Thioalkalivibrio</taxon>
    </lineage>
</organism>
<gene>
    <name evidence="1" type="primary">hisZ</name>
    <name type="ordered locus">Tgr7_0902</name>
</gene>
<protein>
    <recommendedName>
        <fullName evidence="1">ATP phosphoribosyltransferase regulatory subunit</fullName>
    </recommendedName>
</protein>
<dbReference type="EMBL" id="CP001339">
    <property type="protein sequence ID" value="ACL71993.1"/>
    <property type="molecule type" value="Genomic_DNA"/>
</dbReference>
<dbReference type="RefSeq" id="WP_012637481.1">
    <property type="nucleotide sequence ID" value="NC_011901.1"/>
</dbReference>
<dbReference type="SMR" id="B8GND2"/>
<dbReference type="STRING" id="396588.Tgr7_0902"/>
<dbReference type="KEGG" id="tgr:Tgr7_0902"/>
<dbReference type="eggNOG" id="COG3705">
    <property type="taxonomic scope" value="Bacteria"/>
</dbReference>
<dbReference type="HOGENOM" id="CLU_025113_0_1_6"/>
<dbReference type="OrthoDB" id="9769617at2"/>
<dbReference type="UniPathway" id="UPA00031">
    <property type="reaction ID" value="UER00006"/>
</dbReference>
<dbReference type="Proteomes" id="UP000002383">
    <property type="component" value="Chromosome"/>
</dbReference>
<dbReference type="GO" id="GO:0005737">
    <property type="term" value="C:cytoplasm"/>
    <property type="evidence" value="ECO:0007669"/>
    <property type="project" value="UniProtKB-SubCell"/>
</dbReference>
<dbReference type="GO" id="GO:0000105">
    <property type="term" value="P:L-histidine biosynthetic process"/>
    <property type="evidence" value="ECO:0007669"/>
    <property type="project" value="UniProtKB-UniRule"/>
</dbReference>
<dbReference type="CDD" id="cd00773">
    <property type="entry name" value="HisRS-like_core"/>
    <property type="match status" value="1"/>
</dbReference>
<dbReference type="Gene3D" id="3.30.930.10">
    <property type="entry name" value="Bira Bifunctional Protein, Domain 2"/>
    <property type="match status" value="1"/>
</dbReference>
<dbReference type="HAMAP" id="MF_00125">
    <property type="entry name" value="HisZ"/>
    <property type="match status" value="1"/>
</dbReference>
<dbReference type="InterPro" id="IPR045864">
    <property type="entry name" value="aa-tRNA-synth_II/BPL/LPL"/>
</dbReference>
<dbReference type="InterPro" id="IPR041715">
    <property type="entry name" value="HisRS-like_core"/>
</dbReference>
<dbReference type="InterPro" id="IPR004516">
    <property type="entry name" value="HisRS/HisZ"/>
</dbReference>
<dbReference type="InterPro" id="IPR004517">
    <property type="entry name" value="HisZ"/>
</dbReference>
<dbReference type="NCBIfam" id="TIGR00443">
    <property type="entry name" value="hisZ_biosyn_reg"/>
    <property type="match status" value="1"/>
</dbReference>
<dbReference type="NCBIfam" id="NF008935">
    <property type="entry name" value="PRK12292.1-1"/>
    <property type="match status" value="1"/>
</dbReference>
<dbReference type="NCBIfam" id="NF009086">
    <property type="entry name" value="PRK12421.1"/>
    <property type="match status" value="1"/>
</dbReference>
<dbReference type="PANTHER" id="PTHR11476:SF7">
    <property type="entry name" value="HISTIDINE--TRNA LIGASE"/>
    <property type="match status" value="1"/>
</dbReference>
<dbReference type="PANTHER" id="PTHR11476">
    <property type="entry name" value="HISTIDYL-TRNA SYNTHETASE"/>
    <property type="match status" value="1"/>
</dbReference>
<dbReference type="Pfam" id="PF13393">
    <property type="entry name" value="tRNA-synt_His"/>
    <property type="match status" value="1"/>
</dbReference>
<dbReference type="PIRSF" id="PIRSF001549">
    <property type="entry name" value="His-tRNA_synth"/>
    <property type="match status" value="1"/>
</dbReference>
<dbReference type="SUPFAM" id="SSF55681">
    <property type="entry name" value="Class II aaRS and biotin synthetases"/>
    <property type="match status" value="1"/>
</dbReference>
<accession>B8GND2</accession>
<feature type="chain" id="PRO_1000122675" description="ATP phosphoribosyltransferase regulatory subunit">
    <location>
        <begin position="1"/>
        <end position="395"/>
    </location>
</feature>